<reference key="1">
    <citation type="journal article" date="2007" name="Photosyn. Res.">
        <title>Complete nucleotide sequence of the freshwater unicellular cyanobacterium Synechococcus elongatus PCC 6301 chromosome: gene content and organization.</title>
        <authorList>
            <person name="Sugita C."/>
            <person name="Ogata K."/>
            <person name="Shikata M."/>
            <person name="Jikuya H."/>
            <person name="Takano J."/>
            <person name="Furumichi M."/>
            <person name="Kanehisa M."/>
            <person name="Omata T."/>
            <person name="Sugiura M."/>
            <person name="Sugita M."/>
        </authorList>
    </citation>
    <scope>NUCLEOTIDE SEQUENCE [LARGE SCALE GENOMIC DNA]</scope>
    <source>
        <strain>ATCC 27144 / PCC 6301 / SAUG 1402/1</strain>
    </source>
</reference>
<protein>
    <recommendedName>
        <fullName evidence="1">Cytochrome b6-f complex subunit 4</fullName>
    </recommendedName>
    <alternativeName>
        <fullName evidence="1">17 kDa polypeptide</fullName>
    </alternativeName>
</protein>
<keyword id="KW-0249">Electron transport</keyword>
<keyword id="KW-0472">Membrane</keyword>
<keyword id="KW-0602">Photosynthesis</keyword>
<keyword id="KW-0793">Thylakoid</keyword>
<keyword id="KW-0812">Transmembrane</keyword>
<keyword id="KW-1133">Transmembrane helix</keyword>
<keyword id="KW-0813">Transport</keyword>
<accession>Q5N160</accession>
<comment type="function">
    <text evidence="1">Component of the cytochrome b6-f complex, which mediates electron transfer between photosystem II (PSII) and photosystem I (PSI), cyclic electron flow around PSI, and state transitions.</text>
</comment>
<comment type="subunit">
    <text evidence="1">The 4 large subunits of the cytochrome b6-f complex are cytochrome b6, subunit IV (17 kDa polypeptide, PetD), cytochrome f and the Rieske protein, while the 4 small subunits are PetG, PetL, PetM and PetN. The complex functions as a dimer.</text>
</comment>
<comment type="subcellular location">
    <subcellularLocation>
        <location evidence="1">Cellular thylakoid membrane</location>
        <topology evidence="1">Multi-pass membrane protein</topology>
    </subcellularLocation>
</comment>
<comment type="similarity">
    <text evidence="1">Belongs to the cytochrome b family. PetD subfamily.</text>
</comment>
<feature type="chain" id="PRO_0000061910" description="Cytochrome b6-f complex subunit 4">
    <location>
        <begin position="1"/>
        <end position="160"/>
    </location>
</feature>
<feature type="transmembrane region" description="Helical" evidence="1">
    <location>
        <begin position="36"/>
        <end position="56"/>
    </location>
</feature>
<feature type="transmembrane region" description="Helical" evidence="1">
    <location>
        <begin position="95"/>
        <end position="115"/>
    </location>
</feature>
<feature type="transmembrane region" description="Helical" evidence="1">
    <location>
        <begin position="131"/>
        <end position="151"/>
    </location>
</feature>
<dbReference type="EMBL" id="AP008231">
    <property type="protein sequence ID" value="BAD79960.1"/>
    <property type="molecule type" value="Genomic_DNA"/>
</dbReference>
<dbReference type="RefSeq" id="WP_011244080.1">
    <property type="nucleotide sequence ID" value="NZ_CP085785.1"/>
</dbReference>
<dbReference type="SMR" id="Q5N160"/>
<dbReference type="GeneID" id="72431219"/>
<dbReference type="KEGG" id="syc:syc1770_c"/>
<dbReference type="eggNOG" id="COG1290">
    <property type="taxonomic scope" value="Bacteria"/>
</dbReference>
<dbReference type="Proteomes" id="UP000001175">
    <property type="component" value="Chromosome"/>
</dbReference>
<dbReference type="GO" id="GO:0031676">
    <property type="term" value="C:plasma membrane-derived thylakoid membrane"/>
    <property type="evidence" value="ECO:0007669"/>
    <property type="project" value="UniProtKB-SubCell"/>
</dbReference>
<dbReference type="GO" id="GO:0045158">
    <property type="term" value="F:electron transporter, transferring electrons within cytochrome b6/f complex of photosystem II activity"/>
    <property type="evidence" value="ECO:0007669"/>
    <property type="project" value="UniProtKB-UniRule"/>
</dbReference>
<dbReference type="GO" id="GO:0045156">
    <property type="term" value="F:electron transporter, transferring electrons within the cyclic electron transport pathway of photosynthesis activity"/>
    <property type="evidence" value="ECO:0007669"/>
    <property type="project" value="InterPro"/>
</dbReference>
<dbReference type="GO" id="GO:0008121">
    <property type="term" value="F:ubiquinol-cytochrome-c reductase activity"/>
    <property type="evidence" value="ECO:0007669"/>
    <property type="project" value="TreeGrafter"/>
</dbReference>
<dbReference type="GO" id="GO:0009767">
    <property type="term" value="P:photosynthetic electron transport chain"/>
    <property type="evidence" value="ECO:0007669"/>
    <property type="project" value="InterPro"/>
</dbReference>
<dbReference type="CDD" id="cd00290">
    <property type="entry name" value="cytochrome_b_C"/>
    <property type="match status" value="1"/>
</dbReference>
<dbReference type="FunFam" id="1.10.287.980:FF:000001">
    <property type="entry name" value="Cytochrome b6-f complex subunit 4"/>
    <property type="match status" value="1"/>
</dbReference>
<dbReference type="FunFam" id="1.20.5.510:FF:000002">
    <property type="entry name" value="Cytochrome b6-f complex subunit 4"/>
    <property type="match status" value="1"/>
</dbReference>
<dbReference type="Gene3D" id="1.10.287.980">
    <property type="entry name" value="plastocyanin oxidoreductase"/>
    <property type="match status" value="1"/>
</dbReference>
<dbReference type="Gene3D" id="1.20.5.510">
    <property type="entry name" value="Single helix bin"/>
    <property type="match status" value="1"/>
</dbReference>
<dbReference type="HAMAP" id="MF_01344">
    <property type="entry name" value="Cytb6_f_subIV"/>
    <property type="match status" value="1"/>
</dbReference>
<dbReference type="InterPro" id="IPR005798">
    <property type="entry name" value="Cyt_b/b6_C"/>
</dbReference>
<dbReference type="InterPro" id="IPR036150">
    <property type="entry name" value="Cyt_b/b6_C_sf"/>
</dbReference>
<dbReference type="InterPro" id="IPR005870">
    <property type="entry name" value="Cyt_b6/f_cplx_suIV"/>
</dbReference>
<dbReference type="InterPro" id="IPR048260">
    <property type="entry name" value="Cytochrome_b_C_euk/bac"/>
</dbReference>
<dbReference type="NCBIfam" id="TIGR01156">
    <property type="entry name" value="cytb6_f_IV"/>
    <property type="match status" value="1"/>
</dbReference>
<dbReference type="PANTHER" id="PTHR19271">
    <property type="entry name" value="CYTOCHROME B"/>
    <property type="match status" value="1"/>
</dbReference>
<dbReference type="PANTHER" id="PTHR19271:SF41">
    <property type="entry name" value="CYTOCHROME B_B6 C-TERMINAL REGION PROFILE DOMAIN-CONTAINING PROTEIN"/>
    <property type="match status" value="1"/>
</dbReference>
<dbReference type="Pfam" id="PF00032">
    <property type="entry name" value="Cytochrom_B_C"/>
    <property type="match status" value="1"/>
</dbReference>
<dbReference type="PIRSF" id="PIRSF000033">
    <property type="entry name" value="B6f_17K"/>
    <property type="match status" value="1"/>
</dbReference>
<dbReference type="SUPFAM" id="SSF81648">
    <property type="entry name" value="a domain/subunit of cytochrome bc1 complex (Ubiquinol-cytochrome c reductase)"/>
    <property type="match status" value="1"/>
</dbReference>
<dbReference type="PROSITE" id="PS51003">
    <property type="entry name" value="CYTB_CTER"/>
    <property type="match status" value="1"/>
</dbReference>
<organism>
    <name type="scientific">Synechococcus sp. (strain ATCC 27144 / PCC 6301 / SAUG 1402/1)</name>
    <name type="common">Anacystis nidulans</name>
    <dbReference type="NCBI Taxonomy" id="269084"/>
    <lineage>
        <taxon>Bacteria</taxon>
        <taxon>Bacillati</taxon>
        <taxon>Cyanobacteriota</taxon>
        <taxon>Cyanophyceae</taxon>
        <taxon>Synechococcales</taxon>
        <taxon>Synechococcaceae</taxon>
        <taxon>Synechococcus</taxon>
    </lineage>
</organism>
<gene>
    <name evidence="1" type="primary">petD</name>
    <name type="ordered locus">syc1770_c</name>
</gene>
<proteinExistence type="inferred from homology"/>
<evidence type="ECO:0000255" key="1">
    <source>
        <dbReference type="HAMAP-Rule" id="MF_01344"/>
    </source>
</evidence>
<name>PETD_SYNP6</name>
<sequence>MSILKKPDLSDPILRQKLAKGMGHNYYGEPAWPNDLLYMFPVVILGTIACLTGLAVLDPALVGEPADPFATPLEILPEWYLYPVFQILRIVPNKLLGIVLQSMIPLGLIAIPFIESVNKFQNPFRRPIATAVFLFGTVFTLYLGIGAALPIDKSLTLGLF</sequence>